<reference key="1">
    <citation type="journal article" date="1988" name="Mol. Gen. Genet.">
        <title>Organization and characterization of the virCD genes from Agrobacterium rhizogenes.</title>
        <authorList>
            <person name="Hirayama T."/>
            <person name="Muranaka T."/>
            <person name="Ohkawa H."/>
            <person name="Oka A."/>
        </authorList>
    </citation>
    <scope>NUCLEOTIDE SEQUENCE [GENOMIC DNA]</scope>
    <source>
        <strain>A4</strain>
    </source>
</reference>
<feature type="chain" id="PRO_0000221651" description="Protein VirD4">
    <location>
        <begin position="1"/>
        <end position="671"/>
    </location>
</feature>
<feature type="transmembrane region" description="Helical" evidence="1">
    <location>
        <begin position="12"/>
        <end position="32"/>
    </location>
</feature>
<feature type="transmembrane region" description="Helical" evidence="1">
    <location>
        <begin position="60"/>
        <end position="80"/>
    </location>
</feature>
<feature type="transmembrane region" description="Helical" evidence="1">
    <location>
        <begin position="153"/>
        <end position="173"/>
    </location>
</feature>
<accession>P13464</accession>
<dbReference type="EMBL" id="X12867">
    <property type="protein sequence ID" value="CAA31353.1"/>
    <property type="molecule type" value="Genomic_DNA"/>
</dbReference>
<dbReference type="PIR" id="S06886">
    <property type="entry name" value="S06886"/>
</dbReference>
<dbReference type="RefSeq" id="WP_032488284.1">
    <property type="nucleotide sequence ID" value="NZ_VCBD01000008.1"/>
</dbReference>
<dbReference type="SMR" id="P13464"/>
<dbReference type="TCDB" id="3.A.7.1.1">
    <property type="family name" value="the type iv (conjugal dna-protein transfer or virb) secretory pathway (ivsp) family"/>
</dbReference>
<dbReference type="GeneID" id="86852897"/>
<dbReference type="eggNOG" id="COG3505">
    <property type="taxonomic scope" value="Bacteria"/>
</dbReference>
<dbReference type="GO" id="GO:0005886">
    <property type="term" value="C:plasma membrane"/>
    <property type="evidence" value="ECO:0007669"/>
    <property type="project" value="UniProtKB-SubCell"/>
</dbReference>
<dbReference type="CDD" id="cd01127">
    <property type="entry name" value="TrwB_TraG_TraD_VirD4"/>
    <property type="match status" value="2"/>
</dbReference>
<dbReference type="FunFam" id="3.40.50.300:FF:001671">
    <property type="entry name" value="Type IV secretion system protein VirD4"/>
    <property type="match status" value="1"/>
</dbReference>
<dbReference type="Gene3D" id="3.40.50.300">
    <property type="entry name" value="P-loop containing nucleotide triphosphate hydrolases"/>
    <property type="match status" value="1"/>
</dbReference>
<dbReference type="InterPro" id="IPR027417">
    <property type="entry name" value="P-loop_NTPase"/>
</dbReference>
<dbReference type="InterPro" id="IPR051539">
    <property type="entry name" value="T4SS-coupling_protein"/>
</dbReference>
<dbReference type="InterPro" id="IPR003688">
    <property type="entry name" value="TraG/VirD4"/>
</dbReference>
<dbReference type="NCBIfam" id="NF010424">
    <property type="entry name" value="PRK13850.1"/>
    <property type="match status" value="1"/>
</dbReference>
<dbReference type="PANTHER" id="PTHR37937">
    <property type="entry name" value="CONJUGATIVE TRANSFER: DNA TRANSPORT"/>
    <property type="match status" value="1"/>
</dbReference>
<dbReference type="PANTHER" id="PTHR37937:SF1">
    <property type="entry name" value="CONJUGATIVE TRANSFER: DNA TRANSPORT"/>
    <property type="match status" value="1"/>
</dbReference>
<dbReference type="Pfam" id="PF02534">
    <property type="entry name" value="T4SS-DNA_transf"/>
    <property type="match status" value="1"/>
</dbReference>
<dbReference type="SUPFAM" id="SSF52540">
    <property type="entry name" value="P-loop containing nucleoside triphosphate hydrolases"/>
    <property type="match status" value="1"/>
</dbReference>
<comment type="subcellular location">
    <subcellularLocation>
        <location evidence="2">Cell membrane</location>
        <topology evidence="2">Multi-pass membrane protein</topology>
    </subcellularLocation>
</comment>
<comment type="similarity">
    <text evidence="2">Belongs to the VirD4/TraG family.</text>
</comment>
<organism>
    <name type="scientific">Rhizobium rhizogenes</name>
    <name type="common">Agrobacterium rhizogenes</name>
    <dbReference type="NCBI Taxonomy" id="359"/>
    <lineage>
        <taxon>Bacteria</taxon>
        <taxon>Pseudomonadati</taxon>
        <taxon>Pseudomonadota</taxon>
        <taxon>Alphaproteobacteria</taxon>
        <taxon>Hyphomicrobiales</taxon>
        <taxon>Rhizobiaceae</taxon>
        <taxon>Rhizobium/Agrobacterium group</taxon>
        <taxon>Rhizobium</taxon>
    </lineage>
</organism>
<evidence type="ECO:0000255" key="1"/>
<evidence type="ECO:0000305" key="2"/>
<keyword id="KW-1003">Cell membrane</keyword>
<keyword id="KW-0184">Conjugation</keyword>
<keyword id="KW-0192">Crown gall tumor</keyword>
<keyword id="KW-0472">Membrane</keyword>
<keyword id="KW-0614">Plasmid</keyword>
<keyword id="KW-0812">Transmembrane</keyword>
<keyword id="KW-1133">Transmembrane helix</keyword>
<protein>
    <recommendedName>
        <fullName>Protein VirD4</fullName>
    </recommendedName>
</protein>
<proteinExistence type="inferred from homology"/>
<gene>
    <name type="primary">virD4</name>
</gene>
<geneLocation type="plasmid">
    <name>pRiA4b</name>
</geneLocation>
<sequence length="671" mass="73869">MNSSKITPQRLALSIVCSLAAGFCAASLYATFRHGFNGEAMMTFSVFAFWYETPLYIGHATPVFFCGLSIIIATSVVVLLSQLIISLRNREHHGTARWAAFGEMRHAGYLQRYNRIKGPVFGKTCGPLWFGNYLTNGEQPHSLVVAPTRAGKGVGVVIPTLLTFKGTVIALDVKGELFELTSRARKSSGDAVFKFSPLDPERRTHCYNPVLDIAALPPERQFTETRRLAANLITAKGKGAEGFIDGARDLFVAGILTCIERGTPTIGAVYDLFAQPGEKYKLFAHLAEESRNKEAQRIFDNMAGNDTKILTSYTSVLGDGGLNLWADPLVKAATSRSDFSVYDLRRKRTCVYLCVSPNDLEVVAPLMRLLFQQVVSILQRSLPGKDERYEVLFLLDEFKHLGKLEAIETAITTIAGYKGRFMFIIQSLSALSGTYDEAGKQNFLSNTGVQVFMATADDETPTYISKAIGEYTFQARSTSYSQARMFDHNIQISDQGAPLLRPEQVRLLDDKSEIVLIKGQPPLKLRKVRYYSDRMLRRLFECQIGALPEPASLMLAQDVHQDGQDHLSQQAAVTAALGLGDIDSLVNNGETPTQQNSDMNDEQDNLAIGIYAPQVSVEIDDVVEDANARGVAPVSSVPAEMAPALSAQQQLLGQIIALQQRYRPVSSNPIE</sequence>
<name>VIRD4_RHIRH</name>